<accession>Q9SZ59</accession>
<name>ADM_ARATH</name>
<feature type="chain" id="PRO_0000441607" description="Protein ADMETOS">
    <location>
        <begin position="1"/>
        <end position="264"/>
    </location>
</feature>
<comment type="function">
    <text evidence="2">Product of a dosage-sensitive gene that contributes to the maintenance of paternally and maternally imprinted gene expression in the endosperm in order to balance parental contributions. Underlies postzygotic reproductive isolation by promoting triploid seed arrest in a genetic dosage-dependent manner, thus being a component of postzygotic interploidy hybridization barriers.</text>
</comment>
<comment type="tissue specificity">
    <text evidence="1 2">Paternally imprinted expression in the endosperm.</text>
</comment>
<comment type="disruption phenotype">
    <text evidence="2">Suppressor of the triploid seed abortion phenotype observed in osd1 and jas-3 mutants, thus leading to enlarged and somewhat fertile triploid seeds production characterized by abnormally normalized parental imprinted genes expression.</text>
</comment>
<comment type="miscellaneous">
    <text evidence="3">In Greek mythology, 'Admetos' was one of Jason's companions Argonauts in his quest for the Golden Fleece.</text>
</comment>
<comment type="miscellaneous">
    <text evidence="4">Product of a paternally expressed imprinted gene (PEG).</text>
</comment>
<evidence type="ECO:0000269" key="1">
    <source>
    </source>
</evidence>
<evidence type="ECO:0000269" key="2">
    <source>
    </source>
</evidence>
<evidence type="ECO:0000303" key="3">
    <source>
    </source>
</evidence>
<evidence type="ECO:0000305" key="4">
    <source>
    </source>
</evidence>
<evidence type="ECO:0000312" key="5">
    <source>
        <dbReference type="Araport" id="AT4G11940"/>
    </source>
</evidence>
<evidence type="ECO:0000312" key="6">
    <source>
        <dbReference type="EMBL" id="CAB40935.1"/>
    </source>
</evidence>
<proteinExistence type="evidence at transcript level"/>
<dbReference type="EMBL" id="AL049638">
    <property type="protein sequence ID" value="CAB40935.1"/>
    <property type="molecule type" value="Genomic_DNA"/>
</dbReference>
<dbReference type="EMBL" id="AL161533">
    <property type="protein sequence ID" value="CAB78237.1"/>
    <property type="molecule type" value="Genomic_DNA"/>
</dbReference>
<dbReference type="EMBL" id="CP002687">
    <property type="protein sequence ID" value="AEE83072.1"/>
    <property type="molecule type" value="Genomic_DNA"/>
</dbReference>
<dbReference type="EMBL" id="DQ446823">
    <property type="protein sequence ID" value="ABE65520.1"/>
    <property type="molecule type" value="Genomic_DNA"/>
</dbReference>
<dbReference type="PIR" id="T06601">
    <property type="entry name" value="T06601"/>
</dbReference>
<dbReference type="RefSeq" id="NP_192931.1">
    <property type="nucleotide sequence ID" value="NM_117264.1"/>
</dbReference>
<dbReference type="STRING" id="3702.Q9SZ59"/>
<dbReference type="PaxDb" id="3702-AT4G11940.1"/>
<dbReference type="EnsemblPlants" id="AT4G11940.1">
    <property type="protein sequence ID" value="AT4G11940.1"/>
    <property type="gene ID" value="AT4G11940"/>
</dbReference>
<dbReference type="GeneID" id="826801"/>
<dbReference type="Gramene" id="AT4G11940.1">
    <property type="protein sequence ID" value="AT4G11940.1"/>
    <property type="gene ID" value="AT4G11940"/>
</dbReference>
<dbReference type="KEGG" id="ath:AT4G11940"/>
<dbReference type="Araport" id="AT4G11940"/>
<dbReference type="TAIR" id="AT4G11940">
    <property type="gene designation" value="ADM"/>
</dbReference>
<dbReference type="HOGENOM" id="CLU_1024319_0_0_1"/>
<dbReference type="InParanoid" id="Q9SZ59"/>
<dbReference type="OMA" id="NLEPQGN"/>
<dbReference type="PhylomeDB" id="Q9SZ59"/>
<dbReference type="PRO" id="PR:Q9SZ59"/>
<dbReference type="Proteomes" id="UP000006548">
    <property type="component" value="Chromosome 4"/>
</dbReference>
<dbReference type="ExpressionAtlas" id="Q9SZ59">
    <property type="expression patterns" value="baseline and differential"/>
</dbReference>
<dbReference type="GO" id="GO:0005634">
    <property type="term" value="C:nucleus"/>
    <property type="evidence" value="ECO:0000314"/>
    <property type="project" value="TAIR"/>
</dbReference>
<dbReference type="GO" id="GO:0009960">
    <property type="term" value="P:endosperm development"/>
    <property type="evidence" value="ECO:0000316"/>
    <property type="project" value="TAIR"/>
</dbReference>
<dbReference type="InterPro" id="IPR053052">
    <property type="entry name" value="Imprinting_Balance_Reg"/>
</dbReference>
<dbReference type="PANTHER" id="PTHR45496">
    <property type="entry name" value="CHAPERONE DNAJ-DOMAIN SUPERFAMILY PROTEIN"/>
    <property type="match status" value="1"/>
</dbReference>
<dbReference type="PANTHER" id="PTHR45496:SF32">
    <property type="entry name" value="PROTEIN ADMETOS"/>
    <property type="match status" value="1"/>
</dbReference>
<keyword id="KW-1185">Reference proteome</keyword>
<organism>
    <name type="scientific">Arabidopsis thaliana</name>
    <name type="common">Mouse-ear cress</name>
    <dbReference type="NCBI Taxonomy" id="3702"/>
    <lineage>
        <taxon>Eukaryota</taxon>
        <taxon>Viridiplantae</taxon>
        <taxon>Streptophyta</taxon>
        <taxon>Embryophyta</taxon>
        <taxon>Tracheophyta</taxon>
        <taxon>Spermatophyta</taxon>
        <taxon>Magnoliopsida</taxon>
        <taxon>eudicotyledons</taxon>
        <taxon>Gunneridae</taxon>
        <taxon>Pentapetalae</taxon>
        <taxon>rosids</taxon>
        <taxon>malvids</taxon>
        <taxon>Brassicales</taxon>
        <taxon>Brassicaceae</taxon>
        <taxon>Camelineae</taxon>
        <taxon>Arabidopsis</taxon>
    </lineage>
</organism>
<gene>
    <name evidence="3" type="primary">ADM</name>
    <name evidence="5" type="ordered locus">At4g11940</name>
    <name evidence="6" type="ORF">F16J13.10</name>
</gene>
<sequence>MFSGEGASQIRIAPEDKPIQWCYQILKSRDFKSARYITQMNLKLSKTRHDEYEKGLAICDILIAAENRLPNGLLDCYGMIRMTRPGLVLYQNIEKELNLLGWGNISNPFPFRQEASEKFFFAWSLLSNPTIKEMYDYATSDEVNLEPQGNVNEYMDVDSSSQSGYGLGSVLCSDLPGSEYLKEFADVYPLPLAEKGQAPHNRFGWYDHNVGPETNNNVVVTYEDAKEEECDMSSSSELRIINGRRVKITIEEAAETSDTPSCSR</sequence>
<reference key="1">
    <citation type="journal article" date="1999" name="Nature">
        <title>Sequence and analysis of chromosome 4 of the plant Arabidopsis thaliana.</title>
        <authorList>
            <person name="Mayer K.F.X."/>
            <person name="Schueller C."/>
            <person name="Wambutt R."/>
            <person name="Murphy G."/>
            <person name="Volckaert G."/>
            <person name="Pohl T."/>
            <person name="Duesterhoeft A."/>
            <person name="Stiekema W."/>
            <person name="Entian K.-D."/>
            <person name="Terryn N."/>
            <person name="Harris B."/>
            <person name="Ansorge W."/>
            <person name="Brandt P."/>
            <person name="Grivell L.A."/>
            <person name="Rieger M."/>
            <person name="Weichselgartner M."/>
            <person name="de Simone V."/>
            <person name="Obermaier B."/>
            <person name="Mache R."/>
            <person name="Mueller M."/>
            <person name="Kreis M."/>
            <person name="Delseny M."/>
            <person name="Puigdomenech P."/>
            <person name="Watson M."/>
            <person name="Schmidtheini T."/>
            <person name="Reichert B."/>
            <person name="Portetelle D."/>
            <person name="Perez-Alonso M."/>
            <person name="Boutry M."/>
            <person name="Bancroft I."/>
            <person name="Vos P."/>
            <person name="Hoheisel J."/>
            <person name="Zimmermann W."/>
            <person name="Wedler H."/>
            <person name="Ridley P."/>
            <person name="Langham S.-A."/>
            <person name="McCullagh B."/>
            <person name="Bilham L."/>
            <person name="Robben J."/>
            <person name="van der Schueren J."/>
            <person name="Grymonprez B."/>
            <person name="Chuang Y.-J."/>
            <person name="Vandenbussche F."/>
            <person name="Braeken M."/>
            <person name="Weltjens I."/>
            <person name="Voet M."/>
            <person name="Bastiaens I."/>
            <person name="Aert R."/>
            <person name="Defoor E."/>
            <person name="Weitzenegger T."/>
            <person name="Bothe G."/>
            <person name="Ramsperger U."/>
            <person name="Hilbert H."/>
            <person name="Braun M."/>
            <person name="Holzer E."/>
            <person name="Brandt A."/>
            <person name="Peters S."/>
            <person name="van Staveren M."/>
            <person name="Dirkse W."/>
            <person name="Mooijman P."/>
            <person name="Klein Lankhorst R."/>
            <person name="Rose M."/>
            <person name="Hauf J."/>
            <person name="Koetter P."/>
            <person name="Berneiser S."/>
            <person name="Hempel S."/>
            <person name="Feldpausch M."/>
            <person name="Lamberth S."/>
            <person name="Van den Daele H."/>
            <person name="De Keyser A."/>
            <person name="Buysshaert C."/>
            <person name="Gielen J."/>
            <person name="Villarroel R."/>
            <person name="De Clercq R."/>
            <person name="van Montagu M."/>
            <person name="Rogers J."/>
            <person name="Cronin A."/>
            <person name="Quail M.A."/>
            <person name="Bray-Allen S."/>
            <person name="Clark L."/>
            <person name="Doggett J."/>
            <person name="Hall S."/>
            <person name="Kay M."/>
            <person name="Lennard N."/>
            <person name="McLay K."/>
            <person name="Mayes R."/>
            <person name="Pettett A."/>
            <person name="Rajandream M.A."/>
            <person name="Lyne M."/>
            <person name="Benes V."/>
            <person name="Rechmann S."/>
            <person name="Borkova D."/>
            <person name="Bloecker H."/>
            <person name="Scharfe M."/>
            <person name="Grimm M."/>
            <person name="Loehnert T.-H."/>
            <person name="Dose S."/>
            <person name="de Haan M."/>
            <person name="Maarse A.C."/>
            <person name="Schaefer M."/>
            <person name="Mueller-Auer S."/>
            <person name="Gabel C."/>
            <person name="Fuchs M."/>
            <person name="Fartmann B."/>
            <person name="Granderath K."/>
            <person name="Dauner D."/>
            <person name="Herzl A."/>
            <person name="Neumann S."/>
            <person name="Argiriou A."/>
            <person name="Vitale D."/>
            <person name="Liguori R."/>
            <person name="Piravandi E."/>
            <person name="Massenet O."/>
            <person name="Quigley F."/>
            <person name="Clabauld G."/>
            <person name="Muendlein A."/>
            <person name="Felber R."/>
            <person name="Schnabl S."/>
            <person name="Hiller R."/>
            <person name="Schmidt W."/>
            <person name="Lecharny A."/>
            <person name="Aubourg S."/>
            <person name="Chefdor F."/>
            <person name="Cooke R."/>
            <person name="Berger C."/>
            <person name="Monfort A."/>
            <person name="Casacuberta E."/>
            <person name="Gibbons T."/>
            <person name="Weber N."/>
            <person name="Vandenbol M."/>
            <person name="Bargues M."/>
            <person name="Terol J."/>
            <person name="Torres A."/>
            <person name="Perez-Perez A."/>
            <person name="Purnelle B."/>
            <person name="Bent E."/>
            <person name="Johnson S."/>
            <person name="Tacon D."/>
            <person name="Jesse T."/>
            <person name="Heijnen L."/>
            <person name="Schwarz S."/>
            <person name="Scholler P."/>
            <person name="Heber S."/>
            <person name="Francs P."/>
            <person name="Bielke C."/>
            <person name="Frishman D."/>
            <person name="Haase D."/>
            <person name="Lemcke K."/>
            <person name="Mewes H.-W."/>
            <person name="Stocker S."/>
            <person name="Zaccaria P."/>
            <person name="Bevan M."/>
            <person name="Wilson R.K."/>
            <person name="de la Bastide M."/>
            <person name="Habermann K."/>
            <person name="Parnell L."/>
            <person name="Dedhia N."/>
            <person name="Gnoj L."/>
            <person name="Schutz K."/>
            <person name="Huang E."/>
            <person name="Spiegel L."/>
            <person name="Sekhon M."/>
            <person name="Murray J."/>
            <person name="Sheet P."/>
            <person name="Cordes M."/>
            <person name="Abu-Threideh J."/>
            <person name="Stoneking T."/>
            <person name="Kalicki J."/>
            <person name="Graves T."/>
            <person name="Harmon G."/>
            <person name="Edwards J."/>
            <person name="Latreille P."/>
            <person name="Courtney L."/>
            <person name="Cloud J."/>
            <person name="Abbott A."/>
            <person name="Scott K."/>
            <person name="Johnson D."/>
            <person name="Minx P."/>
            <person name="Bentley D."/>
            <person name="Fulton B."/>
            <person name="Miller N."/>
            <person name="Greco T."/>
            <person name="Kemp K."/>
            <person name="Kramer J."/>
            <person name="Fulton L."/>
            <person name="Mardis E."/>
            <person name="Dante M."/>
            <person name="Pepin K."/>
            <person name="Hillier L.W."/>
            <person name="Nelson J."/>
            <person name="Spieth J."/>
            <person name="Ryan E."/>
            <person name="Andrews S."/>
            <person name="Geisel C."/>
            <person name="Layman D."/>
            <person name="Du H."/>
            <person name="Ali J."/>
            <person name="Berghoff A."/>
            <person name="Jones K."/>
            <person name="Drone K."/>
            <person name="Cotton M."/>
            <person name="Joshu C."/>
            <person name="Antonoiu B."/>
            <person name="Zidanic M."/>
            <person name="Strong C."/>
            <person name="Sun H."/>
            <person name="Lamar B."/>
            <person name="Yordan C."/>
            <person name="Ma P."/>
            <person name="Zhong J."/>
            <person name="Preston R."/>
            <person name="Vil D."/>
            <person name="Shekher M."/>
            <person name="Matero A."/>
            <person name="Shah R."/>
            <person name="Swaby I.K."/>
            <person name="O'Shaughnessy A."/>
            <person name="Rodriguez M."/>
            <person name="Hoffman J."/>
            <person name="Till S."/>
            <person name="Granat S."/>
            <person name="Shohdy N."/>
            <person name="Hasegawa A."/>
            <person name="Hameed A."/>
            <person name="Lodhi M."/>
            <person name="Johnson A."/>
            <person name="Chen E."/>
            <person name="Marra M.A."/>
            <person name="Martienssen R."/>
            <person name="McCombie W.R."/>
        </authorList>
    </citation>
    <scope>NUCLEOTIDE SEQUENCE [LARGE SCALE GENOMIC DNA]</scope>
    <source>
        <strain>cv. Columbia</strain>
    </source>
</reference>
<reference key="2">
    <citation type="journal article" date="2017" name="Plant J.">
        <title>Araport11: a complete reannotation of the Arabidopsis thaliana reference genome.</title>
        <authorList>
            <person name="Cheng C.Y."/>
            <person name="Krishnakumar V."/>
            <person name="Chan A.P."/>
            <person name="Thibaud-Nissen F."/>
            <person name="Schobel S."/>
            <person name="Town C.D."/>
        </authorList>
    </citation>
    <scope>GENOME REANNOTATION</scope>
    <source>
        <strain>cv. Columbia</strain>
    </source>
</reference>
<reference key="3">
    <citation type="journal article" date="2006" name="Plant Biotechnol. J.">
        <title>Simultaneous high-throughput recombinational cloning of open reading frames in closed and open configurations.</title>
        <authorList>
            <person name="Underwood B.A."/>
            <person name="Vanderhaeghen R."/>
            <person name="Whitford R."/>
            <person name="Town C.D."/>
            <person name="Hilson P."/>
        </authorList>
    </citation>
    <scope>NUCLEOTIDE SEQUENCE [LARGE SCALE GENOMIC DNA]</scope>
    <source>
        <strain>cv. Columbia</strain>
    </source>
</reference>
<reference key="4">
    <citation type="journal article" date="2011" name="Proc. Natl. Acad. Sci. U.S.A.">
        <title>Regulation of imprinted gene expression in Arabidopsis endosperm.</title>
        <authorList>
            <person name="Hsieh T.-F."/>
            <person name="Shin J."/>
            <person name="Uzawa R."/>
            <person name="Silva P."/>
            <person name="Cohen S."/>
            <person name="Bauer M.J."/>
            <person name="Hashimoto M."/>
            <person name="Kirkbride R.C."/>
            <person name="Harada J.J."/>
            <person name="Zilberman D."/>
            <person name="Fischer R.L."/>
        </authorList>
    </citation>
    <scope>TISSUE SPECIFICITY</scope>
</reference>
<reference key="5">
    <citation type="journal article" date="2013" name="Dev. Cell">
        <title>An imprinted gene underlies postzygotic reproductive isolation in Arabidopsis thaliana.</title>
        <authorList>
            <person name="Kradolfer D."/>
            <person name="Wolff P."/>
            <person name="Jiang H."/>
            <person name="Siretskiy A."/>
            <person name="Koehler C."/>
        </authorList>
    </citation>
    <scope>FUNCTION</scope>
    <scope>DISRUPTION PHENOTYPE</scope>
    <scope>TISSUE SPECIFICITY</scope>
    <source>
        <strain>cv. Columbia</strain>
    </source>
</reference>
<protein>
    <recommendedName>
        <fullName evidence="3">Protein ADMETOS</fullName>
    </recommendedName>
</protein>